<evidence type="ECO:0000255" key="1">
    <source>
        <dbReference type="HAMAP-Rule" id="MF_00048"/>
    </source>
</evidence>
<comment type="similarity">
    <text evidence="1">Belongs to the UPF0102 family.</text>
</comment>
<dbReference type="EMBL" id="CP000672">
    <property type="protein sequence ID" value="ABQ99448.1"/>
    <property type="molecule type" value="Genomic_DNA"/>
</dbReference>
<dbReference type="SMR" id="A5UF93"/>
<dbReference type="KEGG" id="hiq:CGSHiGG_01960"/>
<dbReference type="HOGENOM" id="CLU_115353_1_0_6"/>
<dbReference type="Proteomes" id="UP000001990">
    <property type="component" value="Chromosome"/>
</dbReference>
<dbReference type="GO" id="GO:0003676">
    <property type="term" value="F:nucleic acid binding"/>
    <property type="evidence" value="ECO:0007669"/>
    <property type="project" value="InterPro"/>
</dbReference>
<dbReference type="Gene3D" id="3.40.1350.10">
    <property type="match status" value="1"/>
</dbReference>
<dbReference type="HAMAP" id="MF_00048">
    <property type="entry name" value="UPF0102"/>
    <property type="match status" value="1"/>
</dbReference>
<dbReference type="InterPro" id="IPR011335">
    <property type="entry name" value="Restrct_endonuc-II-like"/>
</dbReference>
<dbReference type="InterPro" id="IPR011856">
    <property type="entry name" value="tRNA_endonuc-like_dom_sf"/>
</dbReference>
<dbReference type="InterPro" id="IPR003509">
    <property type="entry name" value="UPF0102_YraN-like"/>
</dbReference>
<dbReference type="NCBIfam" id="NF009150">
    <property type="entry name" value="PRK12497.1-3"/>
    <property type="match status" value="1"/>
</dbReference>
<dbReference type="NCBIfam" id="TIGR00252">
    <property type="entry name" value="YraN family protein"/>
    <property type="match status" value="1"/>
</dbReference>
<dbReference type="PANTHER" id="PTHR34039">
    <property type="entry name" value="UPF0102 PROTEIN YRAN"/>
    <property type="match status" value="1"/>
</dbReference>
<dbReference type="PANTHER" id="PTHR34039:SF1">
    <property type="entry name" value="UPF0102 PROTEIN YRAN"/>
    <property type="match status" value="1"/>
</dbReference>
<dbReference type="Pfam" id="PF02021">
    <property type="entry name" value="UPF0102"/>
    <property type="match status" value="1"/>
</dbReference>
<dbReference type="SUPFAM" id="SSF52980">
    <property type="entry name" value="Restriction endonuclease-like"/>
    <property type="match status" value="1"/>
</dbReference>
<accession>A5UF93</accession>
<proteinExistence type="inferred from homology"/>
<organism>
    <name type="scientific">Haemophilus influenzae (strain PittGG)</name>
    <dbReference type="NCBI Taxonomy" id="374931"/>
    <lineage>
        <taxon>Bacteria</taxon>
        <taxon>Pseudomonadati</taxon>
        <taxon>Pseudomonadota</taxon>
        <taxon>Gammaproteobacteria</taxon>
        <taxon>Pasteurellales</taxon>
        <taxon>Pasteurellaceae</taxon>
        <taxon>Haemophilus</taxon>
    </lineage>
</organism>
<feature type="chain" id="PRO_1000009224" description="UPF0102 protein CGSHiGG_01960">
    <location>
        <begin position="1"/>
        <end position="119"/>
    </location>
</feature>
<protein>
    <recommendedName>
        <fullName evidence="1">UPF0102 protein CGSHiGG_01960</fullName>
    </recommendedName>
</protein>
<name>Y1960_HAEIG</name>
<gene>
    <name type="ordered locus">CGSHiGG_01960</name>
</gene>
<sequence length="119" mass="13800">MFSLKRQQGASFEHQARLFLESKGLTFIAANQNFKCGELDLIMNDKETIVFVEVRQRSHSAYGSAIESVDWRKQQKWLDAANLWLAKQNMSLEDANCRFDLIAFGKTPQDIQWIPNFLD</sequence>
<reference key="1">
    <citation type="journal article" date="2007" name="Genome Biol.">
        <title>Characterization and modeling of the Haemophilus influenzae core and supragenomes based on the complete genomic sequences of Rd and 12 clinical nontypeable strains.</title>
        <authorList>
            <person name="Hogg J.S."/>
            <person name="Hu F.Z."/>
            <person name="Janto B."/>
            <person name="Boissy R."/>
            <person name="Hayes J."/>
            <person name="Keefe R."/>
            <person name="Post J.C."/>
            <person name="Ehrlich G.D."/>
        </authorList>
    </citation>
    <scope>NUCLEOTIDE SEQUENCE [LARGE SCALE GENOMIC DNA]</scope>
    <source>
        <strain>PittGG</strain>
    </source>
</reference>